<proteinExistence type="inferred from homology"/>
<name>RS20_SHEHH</name>
<feature type="chain" id="PRO_1000081449" description="Small ribosomal subunit protein bS20">
    <location>
        <begin position="1"/>
        <end position="88"/>
    </location>
</feature>
<feature type="region of interest" description="Disordered" evidence="2">
    <location>
        <begin position="1"/>
        <end position="26"/>
    </location>
</feature>
<feature type="compositionally biased region" description="Basic residues" evidence="2">
    <location>
        <begin position="1"/>
        <end position="21"/>
    </location>
</feature>
<accession>B0TJA6</accession>
<protein>
    <recommendedName>
        <fullName evidence="1">Small ribosomal subunit protein bS20</fullName>
    </recommendedName>
    <alternativeName>
        <fullName evidence="3">30S ribosomal protein S20</fullName>
    </alternativeName>
</protein>
<comment type="function">
    <text evidence="1">Binds directly to 16S ribosomal RNA.</text>
</comment>
<comment type="similarity">
    <text evidence="1">Belongs to the bacterial ribosomal protein bS20 family.</text>
</comment>
<evidence type="ECO:0000255" key="1">
    <source>
        <dbReference type="HAMAP-Rule" id="MF_00500"/>
    </source>
</evidence>
<evidence type="ECO:0000256" key="2">
    <source>
        <dbReference type="SAM" id="MobiDB-lite"/>
    </source>
</evidence>
<evidence type="ECO:0000305" key="3"/>
<gene>
    <name evidence="1" type="primary">rpsT</name>
    <name type="ordered locus">Shal_1128</name>
</gene>
<dbReference type="EMBL" id="CP000931">
    <property type="protein sequence ID" value="ABZ75697.1"/>
    <property type="molecule type" value="Genomic_DNA"/>
</dbReference>
<dbReference type="RefSeq" id="WP_012154338.1">
    <property type="nucleotide sequence ID" value="NC_010334.1"/>
</dbReference>
<dbReference type="SMR" id="B0TJA6"/>
<dbReference type="STRING" id="458817.Shal_1128"/>
<dbReference type="KEGG" id="shl:Shal_1128"/>
<dbReference type="eggNOG" id="COG0268">
    <property type="taxonomic scope" value="Bacteria"/>
</dbReference>
<dbReference type="HOGENOM" id="CLU_160655_4_0_6"/>
<dbReference type="OrthoDB" id="9807974at2"/>
<dbReference type="Proteomes" id="UP000001317">
    <property type="component" value="Chromosome"/>
</dbReference>
<dbReference type="GO" id="GO:0005829">
    <property type="term" value="C:cytosol"/>
    <property type="evidence" value="ECO:0007669"/>
    <property type="project" value="TreeGrafter"/>
</dbReference>
<dbReference type="GO" id="GO:0015935">
    <property type="term" value="C:small ribosomal subunit"/>
    <property type="evidence" value="ECO:0007669"/>
    <property type="project" value="TreeGrafter"/>
</dbReference>
<dbReference type="GO" id="GO:0070181">
    <property type="term" value="F:small ribosomal subunit rRNA binding"/>
    <property type="evidence" value="ECO:0007669"/>
    <property type="project" value="TreeGrafter"/>
</dbReference>
<dbReference type="GO" id="GO:0003735">
    <property type="term" value="F:structural constituent of ribosome"/>
    <property type="evidence" value="ECO:0007669"/>
    <property type="project" value="InterPro"/>
</dbReference>
<dbReference type="GO" id="GO:0006412">
    <property type="term" value="P:translation"/>
    <property type="evidence" value="ECO:0007669"/>
    <property type="project" value="UniProtKB-UniRule"/>
</dbReference>
<dbReference type="FunFam" id="1.20.58.110:FF:000001">
    <property type="entry name" value="30S ribosomal protein S20"/>
    <property type="match status" value="1"/>
</dbReference>
<dbReference type="Gene3D" id="1.20.58.110">
    <property type="entry name" value="Ribosomal protein S20"/>
    <property type="match status" value="1"/>
</dbReference>
<dbReference type="HAMAP" id="MF_00500">
    <property type="entry name" value="Ribosomal_bS20"/>
    <property type="match status" value="1"/>
</dbReference>
<dbReference type="InterPro" id="IPR002583">
    <property type="entry name" value="Ribosomal_bS20"/>
</dbReference>
<dbReference type="InterPro" id="IPR036510">
    <property type="entry name" value="Ribosomal_bS20_sf"/>
</dbReference>
<dbReference type="NCBIfam" id="TIGR00029">
    <property type="entry name" value="S20"/>
    <property type="match status" value="1"/>
</dbReference>
<dbReference type="PANTHER" id="PTHR33398">
    <property type="entry name" value="30S RIBOSOMAL PROTEIN S20"/>
    <property type="match status" value="1"/>
</dbReference>
<dbReference type="PANTHER" id="PTHR33398:SF1">
    <property type="entry name" value="SMALL RIBOSOMAL SUBUNIT PROTEIN BS20C"/>
    <property type="match status" value="1"/>
</dbReference>
<dbReference type="Pfam" id="PF01649">
    <property type="entry name" value="Ribosomal_S20p"/>
    <property type="match status" value="1"/>
</dbReference>
<dbReference type="SUPFAM" id="SSF46992">
    <property type="entry name" value="Ribosomal protein S20"/>
    <property type="match status" value="1"/>
</dbReference>
<reference key="1">
    <citation type="submission" date="2008-01" db="EMBL/GenBank/DDBJ databases">
        <title>Complete sequence of Shewanella halifaxensis HAW-EB4.</title>
        <authorList>
            <consortium name="US DOE Joint Genome Institute"/>
            <person name="Copeland A."/>
            <person name="Lucas S."/>
            <person name="Lapidus A."/>
            <person name="Glavina del Rio T."/>
            <person name="Dalin E."/>
            <person name="Tice H."/>
            <person name="Bruce D."/>
            <person name="Goodwin L."/>
            <person name="Pitluck S."/>
            <person name="Sims D."/>
            <person name="Brettin T."/>
            <person name="Detter J.C."/>
            <person name="Han C."/>
            <person name="Kuske C.R."/>
            <person name="Schmutz J."/>
            <person name="Larimer F."/>
            <person name="Land M."/>
            <person name="Hauser L."/>
            <person name="Kyrpides N."/>
            <person name="Kim E."/>
            <person name="Zhao J.-S."/>
            <person name="Richardson P."/>
        </authorList>
    </citation>
    <scope>NUCLEOTIDE SEQUENCE [LARGE SCALE GENOMIC DNA]</scope>
    <source>
        <strain>HAW-EB4</strain>
    </source>
</reference>
<sequence>MANSKSAKKRALQSEKRRQHNASRSSMLRTYVKKVIAAINAGDHATATAAFAVAQPIVDRMATKGLIHKNKAARYKSRLNAKIKALVA</sequence>
<keyword id="KW-0687">Ribonucleoprotein</keyword>
<keyword id="KW-0689">Ribosomal protein</keyword>
<keyword id="KW-0694">RNA-binding</keyword>
<keyword id="KW-0699">rRNA-binding</keyword>
<organism>
    <name type="scientific">Shewanella halifaxensis (strain HAW-EB4)</name>
    <dbReference type="NCBI Taxonomy" id="458817"/>
    <lineage>
        <taxon>Bacteria</taxon>
        <taxon>Pseudomonadati</taxon>
        <taxon>Pseudomonadota</taxon>
        <taxon>Gammaproteobacteria</taxon>
        <taxon>Alteromonadales</taxon>
        <taxon>Shewanellaceae</taxon>
        <taxon>Shewanella</taxon>
    </lineage>
</organism>